<reference key="1">
    <citation type="submission" date="2006-02" db="EMBL/GenBank/DDBJ databases">
        <title>Complete sequence of chromosome of Rhodoferax ferrireducens DSM 15236.</title>
        <authorList>
            <person name="Copeland A."/>
            <person name="Lucas S."/>
            <person name="Lapidus A."/>
            <person name="Barry K."/>
            <person name="Detter J.C."/>
            <person name="Glavina del Rio T."/>
            <person name="Hammon N."/>
            <person name="Israni S."/>
            <person name="Pitluck S."/>
            <person name="Brettin T."/>
            <person name="Bruce D."/>
            <person name="Han C."/>
            <person name="Tapia R."/>
            <person name="Gilna P."/>
            <person name="Kiss H."/>
            <person name="Schmutz J."/>
            <person name="Larimer F."/>
            <person name="Land M."/>
            <person name="Kyrpides N."/>
            <person name="Ivanova N."/>
            <person name="Richardson P."/>
        </authorList>
    </citation>
    <scope>NUCLEOTIDE SEQUENCE [LARGE SCALE GENOMIC DNA]</scope>
    <source>
        <strain>ATCC BAA-621 / DSM 15236 / T118</strain>
    </source>
</reference>
<dbReference type="EC" id="2.1.1.45" evidence="1"/>
<dbReference type="EMBL" id="CP000267">
    <property type="protein sequence ID" value="ABD70697.1"/>
    <property type="molecule type" value="Genomic_DNA"/>
</dbReference>
<dbReference type="RefSeq" id="WP_011465263.1">
    <property type="nucleotide sequence ID" value="NC_007908.1"/>
</dbReference>
<dbReference type="SMR" id="Q21U56"/>
<dbReference type="STRING" id="338969.Rfer_2986"/>
<dbReference type="KEGG" id="rfr:Rfer_2986"/>
<dbReference type="eggNOG" id="COG0207">
    <property type="taxonomic scope" value="Bacteria"/>
</dbReference>
<dbReference type="HOGENOM" id="CLU_021669_0_0_4"/>
<dbReference type="OrthoDB" id="9774633at2"/>
<dbReference type="UniPathway" id="UPA00575"/>
<dbReference type="Proteomes" id="UP000008332">
    <property type="component" value="Chromosome"/>
</dbReference>
<dbReference type="GO" id="GO:0005829">
    <property type="term" value="C:cytosol"/>
    <property type="evidence" value="ECO:0007669"/>
    <property type="project" value="TreeGrafter"/>
</dbReference>
<dbReference type="GO" id="GO:0004799">
    <property type="term" value="F:thymidylate synthase activity"/>
    <property type="evidence" value="ECO:0007669"/>
    <property type="project" value="UniProtKB-UniRule"/>
</dbReference>
<dbReference type="GO" id="GO:0006231">
    <property type="term" value="P:dTMP biosynthetic process"/>
    <property type="evidence" value="ECO:0007669"/>
    <property type="project" value="UniProtKB-UniRule"/>
</dbReference>
<dbReference type="GO" id="GO:0006235">
    <property type="term" value="P:dTTP biosynthetic process"/>
    <property type="evidence" value="ECO:0007669"/>
    <property type="project" value="UniProtKB-UniRule"/>
</dbReference>
<dbReference type="GO" id="GO:0032259">
    <property type="term" value="P:methylation"/>
    <property type="evidence" value="ECO:0007669"/>
    <property type="project" value="UniProtKB-KW"/>
</dbReference>
<dbReference type="CDD" id="cd00351">
    <property type="entry name" value="TS_Pyrimidine_HMase"/>
    <property type="match status" value="1"/>
</dbReference>
<dbReference type="FunFam" id="3.30.572.10:FF:000013">
    <property type="entry name" value="Thymidylate synthase"/>
    <property type="match status" value="1"/>
</dbReference>
<dbReference type="Gene3D" id="3.30.572.10">
    <property type="entry name" value="Thymidylate synthase/dCMP hydroxymethylase domain"/>
    <property type="match status" value="1"/>
</dbReference>
<dbReference type="HAMAP" id="MF_00008">
    <property type="entry name" value="Thymidy_synth_bact"/>
    <property type="match status" value="1"/>
</dbReference>
<dbReference type="InterPro" id="IPR045097">
    <property type="entry name" value="Thymidate_synth/dCMP_Mease"/>
</dbReference>
<dbReference type="InterPro" id="IPR023451">
    <property type="entry name" value="Thymidate_synth/dCMP_Mease_dom"/>
</dbReference>
<dbReference type="InterPro" id="IPR036926">
    <property type="entry name" value="Thymidate_synth/dCMP_Mease_sf"/>
</dbReference>
<dbReference type="InterPro" id="IPR000398">
    <property type="entry name" value="Thymidylate_synthase"/>
</dbReference>
<dbReference type="InterPro" id="IPR020940">
    <property type="entry name" value="Thymidylate_synthase_AS"/>
</dbReference>
<dbReference type="NCBIfam" id="NF002497">
    <property type="entry name" value="PRK01827.1-3"/>
    <property type="match status" value="1"/>
</dbReference>
<dbReference type="NCBIfam" id="NF002499">
    <property type="entry name" value="PRK01827.1-5"/>
    <property type="match status" value="1"/>
</dbReference>
<dbReference type="NCBIfam" id="TIGR03284">
    <property type="entry name" value="thym_sym"/>
    <property type="match status" value="2"/>
</dbReference>
<dbReference type="PANTHER" id="PTHR11548">
    <property type="entry name" value="THYMIDYLATE SYNTHASE 1"/>
    <property type="match status" value="1"/>
</dbReference>
<dbReference type="PANTHER" id="PTHR11548:SF1">
    <property type="entry name" value="THYMIDYLATE SYNTHASE 1"/>
    <property type="match status" value="1"/>
</dbReference>
<dbReference type="Pfam" id="PF00303">
    <property type="entry name" value="Thymidylat_synt"/>
    <property type="match status" value="1"/>
</dbReference>
<dbReference type="PRINTS" id="PR00108">
    <property type="entry name" value="THYMDSNTHASE"/>
</dbReference>
<dbReference type="SUPFAM" id="SSF55831">
    <property type="entry name" value="Thymidylate synthase/dCMP hydroxymethylase"/>
    <property type="match status" value="1"/>
</dbReference>
<dbReference type="PROSITE" id="PS00091">
    <property type="entry name" value="THYMIDYLATE_SYNTHASE"/>
    <property type="match status" value="1"/>
</dbReference>
<comment type="function">
    <text evidence="1">Catalyzes the reductive methylation of 2'-deoxyuridine-5'-monophosphate (dUMP) to 2'-deoxythymidine-5'-monophosphate (dTMP) while utilizing 5,10-methylenetetrahydrofolate (mTHF) as the methyl donor and reductant in the reaction, yielding dihydrofolate (DHF) as a by-product. This enzymatic reaction provides an intracellular de novo source of dTMP, an essential precursor for DNA biosynthesis.</text>
</comment>
<comment type="catalytic activity">
    <reaction evidence="1">
        <text>dUMP + (6R)-5,10-methylene-5,6,7,8-tetrahydrofolate = 7,8-dihydrofolate + dTMP</text>
        <dbReference type="Rhea" id="RHEA:12104"/>
        <dbReference type="ChEBI" id="CHEBI:15636"/>
        <dbReference type="ChEBI" id="CHEBI:57451"/>
        <dbReference type="ChEBI" id="CHEBI:63528"/>
        <dbReference type="ChEBI" id="CHEBI:246422"/>
        <dbReference type="EC" id="2.1.1.45"/>
    </reaction>
</comment>
<comment type="pathway">
    <text evidence="1">Pyrimidine metabolism; dTTP biosynthesis.</text>
</comment>
<comment type="subunit">
    <text evidence="1">Homodimer.</text>
</comment>
<comment type="subcellular location">
    <subcellularLocation>
        <location evidence="1">Cytoplasm</location>
    </subcellularLocation>
</comment>
<comment type="similarity">
    <text evidence="1">Belongs to the thymidylate synthase family. Bacterial-type ThyA subfamily.</text>
</comment>
<evidence type="ECO:0000255" key="1">
    <source>
        <dbReference type="HAMAP-Rule" id="MF_00008"/>
    </source>
</evidence>
<sequence length="277" mass="31216">MSSHPIRSQYEDFLRHVSTHGVFKADRTGTGTTSVFGYQMRFDLNEGFPLVTTKKVFLKAIVLELLWFLRGDSNVKWLQERGCTIWDEWARPDGDLGPVYGVQWRSWPTPDGGHIDQIAEAIKTLKTNPDSRRIIVSAWNVAELDKMALMPCHAFFQFYVAPAQTPGGKGKLSCQLYQRSADIFLGVPFNIASYALLTHMVAQQCDLDVGDFIWTGGDCHVYSNHAEQVALQLSRTPFAYPTLSIKRKPASIFDYAYEDFEVLGYECHPAIKAPVAV</sequence>
<protein>
    <recommendedName>
        <fullName evidence="1">Thymidylate synthase</fullName>
        <shortName evidence="1">TS</shortName>
        <shortName evidence="1">TSase</shortName>
        <ecNumber evidence="1">2.1.1.45</ecNumber>
    </recommendedName>
</protein>
<proteinExistence type="inferred from homology"/>
<accession>Q21U56</accession>
<feature type="chain" id="PRO_0000321481" description="Thymidylate synthase">
    <location>
        <begin position="1"/>
        <end position="277"/>
    </location>
</feature>
<feature type="active site" description="Nucleophile" evidence="1">
    <location>
        <position position="152"/>
    </location>
</feature>
<feature type="binding site" description="in other chain" evidence="1">
    <location>
        <position position="27"/>
    </location>
    <ligand>
        <name>dUMP</name>
        <dbReference type="ChEBI" id="CHEBI:246422"/>
        <note>ligand shared between dimeric partners</note>
    </ligand>
</feature>
<feature type="binding site" evidence="1">
    <location>
        <begin position="132"/>
        <end position="133"/>
    </location>
    <ligand>
        <name>dUMP</name>
        <dbReference type="ChEBI" id="CHEBI:246422"/>
        <note>ligand shared between dimeric partners</note>
    </ligand>
</feature>
<feature type="binding site" description="in other chain" evidence="1">
    <location>
        <begin position="179"/>
        <end position="182"/>
    </location>
    <ligand>
        <name>dUMP</name>
        <dbReference type="ChEBI" id="CHEBI:246422"/>
        <note>ligand shared between dimeric partners</note>
    </ligand>
</feature>
<feature type="binding site" evidence="1">
    <location>
        <position position="182"/>
    </location>
    <ligand>
        <name>(6R)-5,10-methylene-5,6,7,8-tetrahydrofolate</name>
        <dbReference type="ChEBI" id="CHEBI:15636"/>
    </ligand>
</feature>
<feature type="binding site" description="in other chain" evidence="1">
    <location>
        <position position="190"/>
    </location>
    <ligand>
        <name>dUMP</name>
        <dbReference type="ChEBI" id="CHEBI:246422"/>
        <note>ligand shared between dimeric partners</note>
    </ligand>
</feature>
<feature type="binding site" description="in other chain" evidence="1">
    <location>
        <begin position="220"/>
        <end position="222"/>
    </location>
    <ligand>
        <name>dUMP</name>
        <dbReference type="ChEBI" id="CHEBI:246422"/>
        <note>ligand shared between dimeric partners</note>
    </ligand>
</feature>
<feature type="binding site" evidence="1">
    <location>
        <position position="276"/>
    </location>
    <ligand>
        <name>(6R)-5,10-methylene-5,6,7,8-tetrahydrofolate</name>
        <dbReference type="ChEBI" id="CHEBI:15636"/>
    </ligand>
</feature>
<keyword id="KW-0963">Cytoplasm</keyword>
<keyword id="KW-0489">Methyltransferase</keyword>
<keyword id="KW-0545">Nucleotide biosynthesis</keyword>
<keyword id="KW-1185">Reference proteome</keyword>
<keyword id="KW-0808">Transferase</keyword>
<gene>
    <name evidence="1" type="primary">thyA</name>
    <name type="ordered locus">Rfer_2986</name>
</gene>
<organism>
    <name type="scientific">Albidiferax ferrireducens (strain ATCC BAA-621 / DSM 15236 / T118)</name>
    <name type="common">Rhodoferax ferrireducens</name>
    <dbReference type="NCBI Taxonomy" id="338969"/>
    <lineage>
        <taxon>Bacteria</taxon>
        <taxon>Pseudomonadati</taxon>
        <taxon>Pseudomonadota</taxon>
        <taxon>Betaproteobacteria</taxon>
        <taxon>Burkholderiales</taxon>
        <taxon>Comamonadaceae</taxon>
        <taxon>Rhodoferax</taxon>
    </lineage>
</organism>
<name>TYSY_ALBFT</name>